<protein>
    <recommendedName>
        <fullName evidence="1">Ribosomal protein L11 methyltransferase</fullName>
        <shortName evidence="1">L11 Mtase</shortName>
        <ecNumber evidence="1">2.1.1.-</ecNumber>
    </recommendedName>
</protein>
<organism>
    <name type="scientific">Pelobacter propionicus (strain DSM 2379 / NBRC 103807 / OttBd1)</name>
    <dbReference type="NCBI Taxonomy" id="338966"/>
    <lineage>
        <taxon>Bacteria</taxon>
        <taxon>Pseudomonadati</taxon>
        <taxon>Thermodesulfobacteriota</taxon>
        <taxon>Desulfuromonadia</taxon>
        <taxon>Desulfuromonadales</taxon>
        <taxon>Desulfuromonadaceae</taxon>
        <taxon>Pelobacter</taxon>
    </lineage>
</organism>
<accession>A1AT86</accession>
<name>PRMA_PELPD</name>
<proteinExistence type="inferred from homology"/>
<gene>
    <name evidence="1" type="primary">prmA</name>
    <name type="ordered locus">Ppro_2959</name>
</gene>
<dbReference type="EC" id="2.1.1.-" evidence="1"/>
<dbReference type="EMBL" id="CP000482">
    <property type="protein sequence ID" value="ABL00557.1"/>
    <property type="molecule type" value="Genomic_DNA"/>
</dbReference>
<dbReference type="RefSeq" id="WP_011736792.1">
    <property type="nucleotide sequence ID" value="NC_008609.1"/>
</dbReference>
<dbReference type="SMR" id="A1AT86"/>
<dbReference type="STRING" id="338966.Ppro_2959"/>
<dbReference type="KEGG" id="ppd:Ppro_2959"/>
<dbReference type="eggNOG" id="COG2264">
    <property type="taxonomic scope" value="Bacteria"/>
</dbReference>
<dbReference type="HOGENOM" id="CLU_049382_0_1_7"/>
<dbReference type="OrthoDB" id="9785995at2"/>
<dbReference type="Proteomes" id="UP000006732">
    <property type="component" value="Chromosome"/>
</dbReference>
<dbReference type="GO" id="GO:0005737">
    <property type="term" value="C:cytoplasm"/>
    <property type="evidence" value="ECO:0007669"/>
    <property type="project" value="UniProtKB-SubCell"/>
</dbReference>
<dbReference type="GO" id="GO:0016279">
    <property type="term" value="F:protein-lysine N-methyltransferase activity"/>
    <property type="evidence" value="ECO:0007669"/>
    <property type="project" value="RHEA"/>
</dbReference>
<dbReference type="GO" id="GO:0032259">
    <property type="term" value="P:methylation"/>
    <property type="evidence" value="ECO:0007669"/>
    <property type="project" value="UniProtKB-KW"/>
</dbReference>
<dbReference type="CDD" id="cd02440">
    <property type="entry name" value="AdoMet_MTases"/>
    <property type="match status" value="1"/>
</dbReference>
<dbReference type="Gene3D" id="3.40.50.150">
    <property type="entry name" value="Vaccinia Virus protein VP39"/>
    <property type="match status" value="1"/>
</dbReference>
<dbReference type="HAMAP" id="MF_00735">
    <property type="entry name" value="Methyltr_PrmA"/>
    <property type="match status" value="1"/>
</dbReference>
<dbReference type="InterPro" id="IPR050078">
    <property type="entry name" value="Ribosomal_L11_MeTrfase_PrmA"/>
</dbReference>
<dbReference type="InterPro" id="IPR004498">
    <property type="entry name" value="Ribosomal_PrmA_MeTrfase"/>
</dbReference>
<dbReference type="InterPro" id="IPR029063">
    <property type="entry name" value="SAM-dependent_MTases_sf"/>
</dbReference>
<dbReference type="NCBIfam" id="TIGR00406">
    <property type="entry name" value="prmA"/>
    <property type="match status" value="1"/>
</dbReference>
<dbReference type="PANTHER" id="PTHR43648">
    <property type="entry name" value="ELECTRON TRANSFER FLAVOPROTEIN BETA SUBUNIT LYSINE METHYLTRANSFERASE"/>
    <property type="match status" value="1"/>
</dbReference>
<dbReference type="PANTHER" id="PTHR43648:SF1">
    <property type="entry name" value="ELECTRON TRANSFER FLAVOPROTEIN BETA SUBUNIT LYSINE METHYLTRANSFERASE"/>
    <property type="match status" value="1"/>
</dbReference>
<dbReference type="Pfam" id="PF06325">
    <property type="entry name" value="PrmA"/>
    <property type="match status" value="1"/>
</dbReference>
<dbReference type="PIRSF" id="PIRSF000401">
    <property type="entry name" value="RPL11_MTase"/>
    <property type="match status" value="1"/>
</dbReference>
<dbReference type="SUPFAM" id="SSF53335">
    <property type="entry name" value="S-adenosyl-L-methionine-dependent methyltransferases"/>
    <property type="match status" value="1"/>
</dbReference>
<feature type="chain" id="PRO_1000046055" description="Ribosomal protein L11 methyltransferase">
    <location>
        <begin position="1"/>
        <end position="309"/>
    </location>
</feature>
<feature type="binding site" evidence="1">
    <location>
        <position position="152"/>
    </location>
    <ligand>
        <name>S-adenosyl-L-methionine</name>
        <dbReference type="ChEBI" id="CHEBI:59789"/>
    </ligand>
</feature>
<feature type="binding site" evidence="1">
    <location>
        <position position="178"/>
    </location>
    <ligand>
        <name>S-adenosyl-L-methionine</name>
        <dbReference type="ChEBI" id="CHEBI:59789"/>
    </ligand>
</feature>
<feature type="binding site" evidence="1">
    <location>
        <position position="200"/>
    </location>
    <ligand>
        <name>S-adenosyl-L-methionine</name>
        <dbReference type="ChEBI" id="CHEBI:59789"/>
    </ligand>
</feature>
<feature type="binding site" evidence="1">
    <location>
        <position position="242"/>
    </location>
    <ligand>
        <name>S-adenosyl-L-methionine</name>
        <dbReference type="ChEBI" id="CHEBI:59789"/>
    </ligand>
</feature>
<comment type="function">
    <text evidence="1">Methylates ribosomal protein L11.</text>
</comment>
<comment type="catalytic activity">
    <reaction evidence="1">
        <text>L-lysyl-[protein] + 3 S-adenosyl-L-methionine = N(6),N(6),N(6)-trimethyl-L-lysyl-[protein] + 3 S-adenosyl-L-homocysteine + 3 H(+)</text>
        <dbReference type="Rhea" id="RHEA:54192"/>
        <dbReference type="Rhea" id="RHEA-COMP:9752"/>
        <dbReference type="Rhea" id="RHEA-COMP:13826"/>
        <dbReference type="ChEBI" id="CHEBI:15378"/>
        <dbReference type="ChEBI" id="CHEBI:29969"/>
        <dbReference type="ChEBI" id="CHEBI:57856"/>
        <dbReference type="ChEBI" id="CHEBI:59789"/>
        <dbReference type="ChEBI" id="CHEBI:61961"/>
    </reaction>
</comment>
<comment type="subcellular location">
    <subcellularLocation>
        <location evidence="1">Cytoplasm</location>
    </subcellularLocation>
</comment>
<comment type="similarity">
    <text evidence="1">Belongs to the methyltransferase superfamily. PrmA family.</text>
</comment>
<reference key="1">
    <citation type="submission" date="2006-10" db="EMBL/GenBank/DDBJ databases">
        <title>Complete sequence of chromosome of Pelobacter propionicus DSM 2379.</title>
        <authorList>
            <consortium name="US DOE Joint Genome Institute"/>
            <person name="Copeland A."/>
            <person name="Lucas S."/>
            <person name="Lapidus A."/>
            <person name="Barry K."/>
            <person name="Detter J.C."/>
            <person name="Glavina del Rio T."/>
            <person name="Hammon N."/>
            <person name="Israni S."/>
            <person name="Dalin E."/>
            <person name="Tice H."/>
            <person name="Pitluck S."/>
            <person name="Saunders E."/>
            <person name="Brettin T."/>
            <person name="Bruce D."/>
            <person name="Han C."/>
            <person name="Tapia R."/>
            <person name="Schmutz J."/>
            <person name="Larimer F."/>
            <person name="Land M."/>
            <person name="Hauser L."/>
            <person name="Kyrpides N."/>
            <person name="Kim E."/>
            <person name="Lovley D."/>
            <person name="Richardson P."/>
        </authorList>
    </citation>
    <scope>NUCLEOTIDE SEQUENCE [LARGE SCALE GENOMIC DNA]</scope>
    <source>
        <strain>DSM 2379 / NBRC 103807 / OttBd1</strain>
    </source>
</reference>
<sequence length="309" mass="33989">MTTRWLEITCDIPADLADILASYLGELSGTGVCTENLDVDAFSTDEITLSAIKTVKAYFSEDEDVDARLEEIQNFLDRLAEQHPGLSIPRPIISTVQSEDWSSSWKANFKPLRVGRRLMIVPTWEEPPPYPDDIVLRLDPGMAFGTGGHETTRLCLELLEEIMDGMPILLTPAVLDLGTGSGILAMAAVRLGAGRVVAVDIDPQAVEVARENLALNDLTDQVECDTTPLEALPGTFDVILANILAEELVRLAPQLIQRLSVGGMLVLSGILAEREQLVRAGFACQELEYRETRRQGEWVAMVYRRAARA</sequence>
<keyword id="KW-0963">Cytoplasm</keyword>
<keyword id="KW-0489">Methyltransferase</keyword>
<keyword id="KW-1185">Reference proteome</keyword>
<keyword id="KW-0949">S-adenosyl-L-methionine</keyword>
<keyword id="KW-0808">Transferase</keyword>
<evidence type="ECO:0000255" key="1">
    <source>
        <dbReference type="HAMAP-Rule" id="MF_00735"/>
    </source>
</evidence>